<comment type="function">
    <text evidence="1 2 4 5 6 8 9 11 13 14 15 17 18 19 20 21 24 25">Serine/threonine-protein phosphatase that dephosphorylates a myriad of proteins involved in different signaling pathways including the kinases CSNK1E, ASK1/MAP3K5, PRKDC and RAF1, the nuclear receptors NR3C1, PPARG, ESR1 and ESR2, SMAD proteins and TAU/MAPT (PubMed:14734805, PubMed:14764652, PubMed:14871926, PubMed:15383005, PubMed:15546861, PubMed:16260606, PubMed:16790549, PubMed:16892053, PubMed:19176521, PubMed:19948726, PubMed:21144835, PubMed:22399290, PubMed:22781750, PubMed:23102700, PubMed:30699359, PubMed:9000529). Implicated in wide ranging cellular processes, including apoptosis, differentiation, DNA damage response, cell survival, regulation of ion channels or circadian rhythms, in response to steroid and thyroid hormones, calcium, fatty acids, TGF-beta as well as oxidative and genotoxic stresses (PubMed:14734805, PubMed:14764652, PubMed:14871926, PubMed:15383005, PubMed:15546861, PubMed:16260606, PubMed:16790549, PubMed:16892053, PubMed:19176521, PubMed:19948726, PubMed:21144835, PubMed:22399290, PubMed:22781750, PubMed:23102700, PubMed:30699359, PubMed:9000529). Participates in the control of DNA damage response mechanisms such as checkpoint activation and DNA damage repair through, for instance, the regulation ATM/ATR-signaling and dephosphorylation of PRKDC and TP53BP1 (PubMed:14871926, PubMed:16260606, PubMed:21144835). Inhibits ASK1/MAP3K5-mediated apoptosis induced by oxidative stress (PubMed:23102700). Plays a positive role in adipogenesis, mainly through the dephosphorylation and activation of PPARG transactivation function (By similarity). Also dephosphorylates and inhibits the anti-adipogenic effect of NR3C1 (By similarity). Regulates the circadian rhythms, through the dephosphorylation and activation of CSNK1E (PubMed:16790549). May modulate TGF-beta signaling pathway by the regulation of SMAD3 phosphorylation and protein expression levels (PubMed:22781750). Dephosphorylates and may play a role in the regulation of TAU/MAPT (PubMed:15546861). Through their dephosphorylation, may play a role in the regulation of ions channels such as KCNH2 (By similarity). Dephosphorylate FNIP1, disrupting interaction with HSP90AA1/Hsp90 (PubMed:30699359).</text>
</comment>
<comment type="catalytic activity">
    <reaction evidence="4 5 9 13 15 21 24">
        <text>O-phospho-L-seryl-[protein] + H2O = L-seryl-[protein] + phosphate</text>
        <dbReference type="Rhea" id="RHEA:20629"/>
        <dbReference type="Rhea" id="RHEA-COMP:9863"/>
        <dbReference type="Rhea" id="RHEA-COMP:11604"/>
        <dbReference type="ChEBI" id="CHEBI:15377"/>
        <dbReference type="ChEBI" id="CHEBI:29999"/>
        <dbReference type="ChEBI" id="CHEBI:43474"/>
        <dbReference type="ChEBI" id="CHEBI:83421"/>
        <dbReference type="EC" id="3.1.3.16"/>
    </reaction>
    <physiologicalReaction direction="left-to-right" evidence="4 5 9 13 15 21 24">
        <dbReference type="Rhea" id="RHEA:20630"/>
    </physiologicalReaction>
</comment>
<comment type="catalytic activity">
    <reaction evidence="4 5 9 13 15 21">
        <text>O-phospho-L-threonyl-[protein] + H2O = L-threonyl-[protein] + phosphate</text>
        <dbReference type="Rhea" id="RHEA:47004"/>
        <dbReference type="Rhea" id="RHEA-COMP:11060"/>
        <dbReference type="Rhea" id="RHEA-COMP:11605"/>
        <dbReference type="ChEBI" id="CHEBI:15377"/>
        <dbReference type="ChEBI" id="CHEBI:30013"/>
        <dbReference type="ChEBI" id="CHEBI:43474"/>
        <dbReference type="ChEBI" id="CHEBI:61977"/>
        <dbReference type="EC" id="3.1.3.16"/>
    </reaction>
    <physiologicalReaction direction="left-to-right" evidence="4 5 9 13 15 21">
        <dbReference type="Rhea" id="RHEA:47005"/>
    </physiologicalReaction>
</comment>
<comment type="cofactor">
    <cofactor>
        <name>Mg(2+)</name>
        <dbReference type="ChEBI" id="CHEBI:18420"/>
    </cofactor>
    <cofactor>
        <name>Mn(2+)</name>
        <dbReference type="ChEBI" id="CHEBI:29035"/>
    </cofactor>
    <text evidence="7 10 16">Binds 2 Mg(2+) or Mn(2+) cations per subunit.</text>
</comment>
<comment type="activity regulation">
    <text evidence="8 10 16 17 19 25">Autoinhibited. In the autoinhibited state, the TPR domain interacts with the catalytic region and prevents substrate access to the catalytic pocket. Allosterically activated by various polyunsaturated fatty acids, free long-chain fatty-acids and long-chain fatty acyl-CoA esters, arachidonic acid being the most effective activator. HSP90A and probably RAC1, GNA12 and GNA13 can also release the autoinhibition by the TPR repeat. Activation by RAC1, GNA12 and GNA13 is synergistic with the one produced by fatty acids binding. Inhibited by okadaic acid.</text>
</comment>
<comment type="biophysicochemical properties">
    <kinetics>
        <KM evidence="9 13">1.847 uM for CSNK1E (at 30 degrees Celsius)</KM>
        <KM evidence="9 13">13.2 uM for MAPT/TAU (at pH 7.4 and 30 degrees Celsius)</KM>
    </kinetics>
</comment>
<comment type="subunit">
    <text evidence="2 6 8 10 12 13 17 19 20 21 22 23 26">Probably forms a complex composed of chaperones HSP90 and HSP70, co-chaperones STIP1/HOP, CDC37, PPP5C, PTGES3/p23, TSC1 and client protein TSC2 (PubMed:29127155). Probably forms a complex composed of chaperones HSP90 and HSP70, co-chaperones CDC37, PPP5C, TSC1 and client protein TSC2, CDK4, AKT, RAF1 and NR3C1; this complex does not contain co-chaperones STIP1/HOP and PTGES3/p23 (PubMed:29127155). Part of a complex with HSP90/HSP90AA1 and steroid receptors (By similarity). Interacts (via TPR repeats) with HSP90AA1 (via TPR repeat-binding motif) or HSPA1A/HSPA1B; the interaction is direct and activates the phosphatase activity (PubMed:15383005, PubMed:15577939, PubMed:16531226). Dissociates from HSPA1A/HSPA1B and HSP90AA1 in response to arachidonic acid (PubMed:15383005). Interacts with CPNE1 (via VWFA domain) (By similarity). Interacts with CDC16, CDC27 (PubMed:9405394). Interacts with KLHDC10 (via the 6 Kelch repeats); inhibits the phosphatase activity on MAP3K5 (PubMed:23102700). Interacts with ATM and ATR; both interactions are induced by DNA damage and enhance ATM and ATR kinase activity (PubMed:14871926). Interacts with RAD17; reduced by DNA damage (PubMed:14871926). Interacts with nuclear receptors such as NR3C1/GCR and PPARG (activated by agonist); regulates their transactivation activities (By similarity). Interacts (via TPR repeats) with S100 proteins S100A1, S100A2, S100A6, S100B and S100P; the interactions are calcium-dependent, strongly activate PPP5C phosphatase activity and compete with HSP90AA1 and MAP3K5 interactions (PubMed:22399290). Interacts with SMAD2 and SMAD3 but not with SMAD1; decreases SMAD3 phosphorylation and protein levels (PubMed:22781750). Interacts (via TPR repeats) with CRY1 and CRY2; the interaction with CRY2 down-regulates the phosphatase activity on CSNK1E (PubMed:16790549). Interacts (via TPR repeats) with the active form of RAC1, GNA12 or GNA13; these interactions activate the phosphatase activity and translocate PPP5C to the cell membrane (PubMed:19948726). Interacts with FLCN (PubMed:27353360).</text>
</comment>
<comment type="interaction">
    <interactant intactId="EBI-716663">
        <id>P53041</id>
    </interactant>
    <interactant intactId="EBI-527363">
        <id>Q9UL18</id>
        <label>AGO1</label>
    </interactant>
    <organismsDiffer>false</organismsDiffer>
    <experiments>2</experiments>
</comment>
<comment type="interaction">
    <interactant intactId="EBI-716663">
        <id>P53041</id>
    </interactant>
    <interactant intactId="EBI-2267883">
        <id>Q9H9G7</id>
        <label>AGO3</label>
    </interactant>
    <organismsDiffer>false</organismsDiffer>
    <experiments>2</experiments>
</comment>
<comment type="interaction">
    <interactant intactId="EBI-716663">
        <id>P53041</id>
    </interactant>
    <interactant intactId="EBI-295634">
        <id>Q16543</id>
        <label>CDC37</label>
    </interactant>
    <organismsDiffer>false</organismsDiffer>
    <experiments>5</experiments>
</comment>
<comment type="interaction">
    <interactant intactId="EBI-716663">
        <id>P53041</id>
    </interactant>
    <interactant intactId="EBI-1383449">
        <id>P50750</id>
        <label>CDK9</label>
    </interactant>
    <organismsDiffer>false</organismsDiffer>
    <experiments>3</experiments>
</comment>
<comment type="interaction">
    <interactant intactId="EBI-716663">
        <id>P53041</id>
    </interactant>
    <interactant intactId="EBI-2212355">
        <id>Q49AN0</id>
        <label>CRY2</label>
    </interactant>
    <organismsDiffer>false</organismsDiffer>
    <experiments>3</experiments>
</comment>
<comment type="interaction">
    <interactant intactId="EBI-716663">
        <id>P53041</id>
    </interactant>
    <interactant intactId="EBI-78473">
        <id>P03372</id>
        <label>ESR1</label>
    </interactant>
    <organismsDiffer>false</organismsDiffer>
    <experiments>4</experiments>
</comment>
<comment type="interaction">
    <interactant intactId="EBI-716663">
        <id>P53041</id>
    </interactant>
    <interactant intactId="EBI-78505">
        <id>Q92731</id>
        <label>ESR2</label>
    </interactant>
    <organismsDiffer>false</organismsDiffer>
    <experiments>4</experiments>
</comment>
<comment type="interaction">
    <interactant intactId="EBI-716663">
        <id>P53041</id>
    </interactant>
    <interactant intactId="EBI-296047">
        <id>P07900</id>
        <label>HSP90AA1</label>
    </interactant>
    <organismsDiffer>false</organismsDiffer>
    <experiments>13</experiments>
</comment>
<comment type="interaction">
    <interactant intactId="EBI-716663">
        <id>P53041</id>
    </interactant>
    <interactant intactId="EBI-352572">
        <id>P08238</id>
        <label>HSP90AB1</label>
    </interactant>
    <organismsDiffer>false</organismsDiffer>
    <experiments>9</experiments>
</comment>
<comment type="interaction">
    <interactant intactId="EBI-716663">
        <id>P53041</id>
    </interactant>
    <interactant intactId="EBI-1055462">
        <id>Q5SY16</id>
        <label>NOL9</label>
    </interactant>
    <organismsDiffer>false</organismsDiffer>
    <experiments>2</experiments>
</comment>
<comment type="interaction">
    <interactant intactId="EBI-716663">
        <id>P53041</id>
    </interactant>
    <interactant intactId="EBI-302388">
        <id>P30153</id>
        <label>PPP2R1A</label>
    </interactant>
    <organismsDiffer>false</organismsDiffer>
    <experiments>3</experiments>
</comment>
<comment type="interaction">
    <interactant intactId="EBI-716663">
        <id>P53041</id>
    </interactant>
    <interactant intactId="EBI-716663">
        <id>P53041</id>
        <label>PPP5C</label>
    </interactant>
    <organismsDiffer>false</organismsDiffer>
    <experiments>2</experiments>
</comment>
<comment type="interaction">
    <interactant intactId="EBI-716663">
        <id>P53041</id>
    </interactant>
    <interactant intactId="EBI-10244509">
        <id>Q5JT25</id>
        <label>RAB41</label>
    </interactant>
    <organismsDiffer>false</organismsDiffer>
    <experiments>2</experiments>
</comment>
<comment type="interaction">
    <interactant intactId="EBI-716663">
        <id>P53041</id>
    </interactant>
    <interactant intactId="EBI-1054052">
        <id>P31948</id>
        <label>STIP1</label>
    </interactant>
    <organismsDiffer>false</organismsDiffer>
    <experiments>4</experiments>
</comment>
<comment type="subcellular location">
    <subcellularLocation>
        <location evidence="8">Nucleus</location>
    </subcellularLocation>
    <subcellularLocation>
        <location evidence="8 17">Cytoplasm</location>
    </subcellularLocation>
    <subcellularLocation>
        <location evidence="17">Cell membrane</location>
    </subcellularLocation>
    <text evidence="8 17">Predominantly nuclear (PubMed:15383005). But also present in the cytoplasm (PubMed:15383005). Translocates from the cytoplasm to the plasma membrane in a RAC1-dependent manner (PubMed:19948726).</text>
</comment>
<comment type="tissue specificity">
    <text evidence="9">Ubiquitous.</text>
</comment>
<comment type="PTM">
    <text evidence="8 21">Activated by at least two different proteolytic cleavages producing a 56 kDa and a 50 kDa form.</text>
</comment>
<comment type="similarity">
    <text evidence="27">Belongs to the PPP phosphatase family. PP-5 (PP-T) subfamily.</text>
</comment>
<feature type="initiator methionine" description="Removed" evidence="35">
    <location>
        <position position="1"/>
    </location>
</feature>
<feature type="chain" id="PRO_0000058894" description="Serine/threonine-protein phosphatase 5">
    <location>
        <begin position="2"/>
        <end position="499"/>
    </location>
</feature>
<feature type="repeat" description="TPR 1">
    <location>
        <begin position="28"/>
        <end position="61"/>
    </location>
</feature>
<feature type="repeat" description="TPR 2">
    <location>
        <begin position="62"/>
        <end position="95"/>
    </location>
</feature>
<feature type="repeat" description="TPR 3">
    <location>
        <begin position="96"/>
        <end position="129"/>
    </location>
</feature>
<feature type="region of interest" description="Disordered" evidence="3">
    <location>
        <begin position="1"/>
        <end position="23"/>
    </location>
</feature>
<feature type="region of interest" description="Catalytic">
    <location>
        <begin position="184"/>
        <end position="499"/>
    </location>
</feature>
<feature type="region of interest" description="Required for autoinhibition" evidence="1">
    <location>
        <begin position="495"/>
        <end position="499"/>
    </location>
</feature>
<feature type="active site" description="Proton donor/acceptor" evidence="7">
    <location>
        <position position="304"/>
    </location>
</feature>
<feature type="binding site" evidence="7 10 16 28 29 30 31 32 33 34">
    <location>
        <position position="242"/>
    </location>
    <ligand>
        <name>Mn(2+)</name>
        <dbReference type="ChEBI" id="CHEBI:29035"/>
        <label>1</label>
    </ligand>
</feature>
<feature type="binding site" evidence="7 10 16 28 29 30 31 32 33 34">
    <location>
        <position position="244"/>
    </location>
    <ligand>
        <name>Mn(2+)</name>
        <dbReference type="ChEBI" id="CHEBI:29035"/>
        <label>1</label>
    </ligand>
</feature>
<feature type="binding site" evidence="7">
    <location>
        <position position="244"/>
    </location>
    <ligand>
        <name>substrate</name>
    </ligand>
</feature>
<feature type="binding site" evidence="7 10 16 28 29 30 31 32 33 34">
    <location>
        <position position="271"/>
    </location>
    <ligand>
        <name>Mn(2+)</name>
        <dbReference type="ChEBI" id="CHEBI:29035"/>
        <label>1</label>
    </ligand>
</feature>
<feature type="binding site" evidence="7 10 16 28 29 30 31 32 33 34">
    <location>
        <position position="271"/>
    </location>
    <ligand>
        <name>Mn(2+)</name>
        <dbReference type="ChEBI" id="CHEBI:29035"/>
        <label>2</label>
    </ligand>
</feature>
<feature type="binding site" evidence="7">
    <location>
        <position position="275"/>
    </location>
    <ligand>
        <name>substrate</name>
    </ligand>
</feature>
<feature type="binding site" evidence="7">
    <location>
        <begin position="303"/>
        <end position="304"/>
    </location>
    <ligand>
        <name>substrate</name>
    </ligand>
</feature>
<feature type="binding site" evidence="7 10 16 28 29 30 31 32 33 34">
    <location>
        <position position="303"/>
    </location>
    <ligand>
        <name>Mn(2+)</name>
        <dbReference type="ChEBI" id="CHEBI:29035"/>
        <label>2</label>
    </ligand>
</feature>
<feature type="binding site" evidence="7 10 16 28 29 30 31 32 33 34">
    <location>
        <position position="352"/>
    </location>
    <ligand>
        <name>Mn(2+)</name>
        <dbReference type="ChEBI" id="CHEBI:29035"/>
        <label>2</label>
    </ligand>
</feature>
<feature type="binding site" evidence="7">
    <location>
        <position position="400"/>
    </location>
    <ligand>
        <name>substrate</name>
    </ligand>
</feature>
<feature type="binding site" evidence="7 10 16 28 29 30 31 32 33 34">
    <location>
        <position position="427"/>
    </location>
    <ligand>
        <name>Mn(2+)</name>
        <dbReference type="ChEBI" id="CHEBI:29035"/>
        <label>2</label>
    </ligand>
</feature>
<feature type="binding site" evidence="7">
    <location>
        <position position="427"/>
    </location>
    <ligand>
        <name>substrate</name>
    </ligand>
</feature>
<feature type="modified residue" description="N-acetylalanine" evidence="35">
    <location>
        <position position="2"/>
    </location>
</feature>
<feature type="mutagenesis site" description="Loss of interaction with HSP90AA1. No effect on interaction with S100A1, S100A2 and S100A6." evidence="19">
    <original>K</original>
    <variation>A</variation>
    <location>
        <position position="32"/>
    </location>
</feature>
<feature type="mutagenesis site" description="Loss of interaction with HSP90AA1. No effect on interaction with S100A1, S100A2 and S100A6." evidence="19">
    <original>R</original>
    <variation>A</variation>
    <location>
        <position position="74"/>
    </location>
</feature>
<feature type="mutagenesis site" description="No effect on interaction with HSP90AA1." evidence="12">
    <original>G</original>
    <variation>N</variation>
    <location>
        <position position="83"/>
    </location>
</feature>
<feature type="mutagenesis site" description="Decreases interaction with RAC1 and translocation to the membrane in presence of active RAC1." evidence="17">
    <original>K</original>
    <variation>E</variation>
    <location>
        <position position="93"/>
    </location>
</feature>
<feature type="mutagenesis site" description="Loss of interaction with HSP90AA1. No effect on interaction with S100A1, S100A2 and S100A6. Loss of interaction with RAF1." evidence="14 19">
    <original>K</original>
    <variation>A</variation>
    <location>
        <position position="97"/>
    </location>
</feature>
<feature type="mutagenesis site" description="Loss of interaction with HSP90AA1. No effect on interaction with S100A1, S100A2 and S100A6." evidence="19">
    <original>R</original>
    <variation>A</variation>
    <location>
        <position position="101"/>
    </location>
</feature>
<feature type="mutagenesis site" description="Catalytically inactive; no effect on interaction with CRY2 but increases the stability of the interaction with CSNK1E. No effect on RAF1 phosphorylation." evidence="13 14 17">
    <original>H</original>
    <variation>Q</variation>
    <location>
        <position position="304"/>
    </location>
</feature>
<feature type="sequence conflict" description="In Ref. 4; AAB60384." evidence="27" ref="4">
    <original>S</original>
    <variation>T</variation>
    <location>
        <position position="403"/>
    </location>
</feature>
<feature type="helix" evidence="36">
    <location>
        <begin position="22"/>
        <end position="40"/>
    </location>
</feature>
<feature type="helix" evidence="36">
    <location>
        <begin position="44"/>
        <end position="57"/>
    </location>
</feature>
<feature type="helix" evidence="36">
    <location>
        <begin position="62"/>
        <end position="74"/>
    </location>
</feature>
<feature type="helix" evidence="36">
    <location>
        <begin position="78"/>
        <end position="91"/>
    </location>
</feature>
<feature type="strand" evidence="38">
    <location>
        <begin position="92"/>
        <end position="94"/>
    </location>
</feature>
<feature type="helix" evidence="36">
    <location>
        <begin position="96"/>
        <end position="108"/>
    </location>
</feature>
<feature type="helix" evidence="36">
    <location>
        <begin position="112"/>
        <end position="125"/>
    </location>
</feature>
<feature type="helix" evidence="36">
    <location>
        <begin position="130"/>
        <end position="164"/>
    </location>
</feature>
<feature type="strand" evidence="42">
    <location>
        <begin position="182"/>
        <end position="184"/>
    </location>
</feature>
<feature type="helix" evidence="41">
    <location>
        <begin position="188"/>
        <end position="199"/>
    </location>
</feature>
<feature type="helix" evidence="41">
    <location>
        <begin position="206"/>
        <end position="221"/>
    </location>
</feature>
<feature type="strand" evidence="41">
    <location>
        <begin position="225"/>
        <end position="229"/>
    </location>
</feature>
<feature type="strand" evidence="41">
    <location>
        <begin position="236"/>
        <end position="240"/>
    </location>
</feature>
<feature type="helix" evidence="41">
    <location>
        <begin position="247"/>
        <end position="257"/>
    </location>
</feature>
<feature type="strand" evidence="41">
    <location>
        <begin position="262"/>
        <end position="264"/>
    </location>
</feature>
<feature type="strand" evidence="41">
    <location>
        <begin position="266"/>
        <end position="270"/>
    </location>
</feature>
<feature type="strand" evidence="41">
    <location>
        <begin position="273"/>
        <end position="276"/>
    </location>
</feature>
<feature type="helix" evidence="41">
    <location>
        <begin position="279"/>
        <end position="292"/>
    </location>
</feature>
<feature type="turn" evidence="41">
    <location>
        <begin position="294"/>
        <end position="296"/>
    </location>
</feature>
<feature type="strand" evidence="41">
    <location>
        <begin position="297"/>
        <end position="300"/>
    </location>
</feature>
<feature type="strand" evidence="40">
    <location>
        <begin position="303"/>
        <end position="306"/>
    </location>
</feature>
<feature type="helix" evidence="41">
    <location>
        <begin position="307"/>
        <end position="313"/>
    </location>
</feature>
<feature type="helix" evidence="41">
    <location>
        <begin position="315"/>
        <end position="322"/>
    </location>
</feature>
<feature type="helix" evidence="41">
    <location>
        <begin position="325"/>
        <end position="335"/>
    </location>
</feature>
<feature type="strand" evidence="41">
    <location>
        <begin position="340"/>
        <end position="344"/>
    </location>
</feature>
<feature type="turn" evidence="41">
    <location>
        <begin position="345"/>
        <end position="347"/>
    </location>
</feature>
<feature type="strand" evidence="41">
    <location>
        <begin position="348"/>
        <end position="350"/>
    </location>
</feature>
<feature type="strand" evidence="37">
    <location>
        <begin position="357"/>
        <end position="359"/>
    </location>
</feature>
<feature type="helix" evidence="41">
    <location>
        <begin position="363"/>
        <end position="367"/>
    </location>
</feature>
<feature type="strand" evidence="39">
    <location>
        <begin position="372"/>
        <end position="374"/>
    </location>
</feature>
<feature type="strand" evidence="41">
    <location>
        <begin position="377"/>
        <end position="379"/>
    </location>
</feature>
<feature type="helix" evidence="41">
    <location>
        <begin position="380"/>
        <end position="386"/>
    </location>
</feature>
<feature type="strand" evidence="41">
    <location>
        <begin position="391"/>
        <end position="397"/>
    </location>
</feature>
<feature type="strand" evidence="41">
    <location>
        <begin position="401"/>
        <end position="406"/>
    </location>
</feature>
<feature type="helix" evidence="41">
    <location>
        <begin position="408"/>
        <end position="417"/>
    </location>
</feature>
<feature type="strand" evidence="41">
    <location>
        <begin position="422"/>
        <end position="425"/>
    </location>
</feature>
<feature type="strand" evidence="41">
    <location>
        <begin position="433"/>
        <end position="437"/>
    </location>
</feature>
<feature type="helix" evidence="41">
    <location>
        <begin position="438"/>
        <end position="440"/>
    </location>
</feature>
<feature type="strand" evidence="41">
    <location>
        <begin position="442"/>
        <end position="446"/>
    </location>
</feature>
<feature type="helix" evidence="41">
    <location>
        <begin position="451"/>
        <end position="453"/>
    </location>
</feature>
<feature type="strand" evidence="41">
    <location>
        <begin position="459"/>
        <end position="465"/>
    </location>
</feature>
<feature type="strand" evidence="41">
    <location>
        <begin position="468"/>
        <end position="476"/>
    </location>
</feature>
<feature type="turn" evidence="41">
    <location>
        <begin position="486"/>
        <end position="489"/>
    </location>
</feature>
<feature type="helix" evidence="37">
    <location>
        <begin position="492"/>
        <end position="495"/>
    </location>
</feature>
<protein>
    <recommendedName>
        <fullName>Serine/threonine-protein phosphatase 5</fullName>
        <shortName>PP5</shortName>
        <ecNumber evidence="4 5 9 13 15 21 24">3.1.3.16</ecNumber>
    </recommendedName>
    <alternativeName>
        <fullName>Protein phosphatase T</fullName>
        <shortName>PP-T</shortName>
        <shortName>PPT</shortName>
    </alternativeName>
</protein>
<sequence length="499" mass="56879">MAMAEGERTECAEPPRDEPPADGALKRAEELKTQANDYFKAKDYENAIKFYSQAIELNPSNAIYYGNRSLAYLRTECYGYALGDATRAIELDKKYIKGYYRRAASNMALGKFRAALRDYETVVKVKPHDKDAKMKYQECNKIVKQKAFERAIAGDEHKRSVVDSLDIESMTIEDEYSGPKLEDGKVTISFMKELMQWYKDQKKLHRKCAYQILVQVKEVLSKLSTLVETTLKETEKITVCGDTHGQFYDLLNIFELNGLPSETNPYIFNGDFVDRGSFSVEVILTLFGFKLLYPDHFHLLRGNHETDNMNQIYGFEGEVKAKYTAQMYELFSEVFEWLPLAQCINGKVLIMHGGLFSEDGVTLDDIRKIERNRQPPDSGPMCDLLWSDPQPQNGRSISKRGVSCQFGPDVTKAFLEENNLDYIIRSHEVKAEGYEVAHGGRCVTVFSAPNYCDQMGNKASYIHLQGSDLRPQFHQFTAVPHPNVKPMAYANTLLQLGMM</sequence>
<name>PPP5_HUMAN</name>
<accession>P53041</accession>
<accession>Q16722</accession>
<accession>Q53XV2</accession>
<organism>
    <name type="scientific">Homo sapiens</name>
    <name type="common">Human</name>
    <dbReference type="NCBI Taxonomy" id="9606"/>
    <lineage>
        <taxon>Eukaryota</taxon>
        <taxon>Metazoa</taxon>
        <taxon>Chordata</taxon>
        <taxon>Craniata</taxon>
        <taxon>Vertebrata</taxon>
        <taxon>Euteleostomi</taxon>
        <taxon>Mammalia</taxon>
        <taxon>Eutheria</taxon>
        <taxon>Euarchontoglires</taxon>
        <taxon>Primates</taxon>
        <taxon>Haplorrhini</taxon>
        <taxon>Catarrhini</taxon>
        <taxon>Hominidae</taxon>
        <taxon>Homo</taxon>
    </lineage>
</organism>
<gene>
    <name type="primary">PPP5C</name>
    <name type="synonym">PPP5</name>
</gene>
<evidence type="ECO:0000250" key="1">
    <source>
        <dbReference type="UniProtKB" id="P53042"/>
    </source>
</evidence>
<evidence type="ECO:0000250" key="2">
    <source>
        <dbReference type="UniProtKB" id="Q60676"/>
    </source>
</evidence>
<evidence type="ECO:0000256" key="3">
    <source>
        <dbReference type="SAM" id="MobiDB-lite"/>
    </source>
</evidence>
<evidence type="ECO:0000269" key="4">
    <source>
    </source>
</evidence>
<evidence type="ECO:0000269" key="5">
    <source>
    </source>
</evidence>
<evidence type="ECO:0000269" key="6">
    <source>
    </source>
</evidence>
<evidence type="ECO:0000269" key="7">
    <source>
    </source>
</evidence>
<evidence type="ECO:0000269" key="8">
    <source>
    </source>
</evidence>
<evidence type="ECO:0000269" key="9">
    <source>
    </source>
</evidence>
<evidence type="ECO:0000269" key="10">
    <source>
    </source>
</evidence>
<evidence type="ECO:0000269" key="11">
    <source>
    </source>
</evidence>
<evidence type="ECO:0000269" key="12">
    <source>
    </source>
</evidence>
<evidence type="ECO:0000269" key="13">
    <source>
    </source>
</evidence>
<evidence type="ECO:0000269" key="14">
    <source>
    </source>
</evidence>
<evidence type="ECO:0000269" key="15">
    <source>
    </source>
</evidence>
<evidence type="ECO:0000269" key="16">
    <source>
    </source>
</evidence>
<evidence type="ECO:0000269" key="17">
    <source>
    </source>
</evidence>
<evidence type="ECO:0000269" key="18">
    <source>
    </source>
</evidence>
<evidence type="ECO:0000269" key="19">
    <source>
    </source>
</evidence>
<evidence type="ECO:0000269" key="20">
    <source>
    </source>
</evidence>
<evidence type="ECO:0000269" key="21">
    <source>
    </source>
</evidence>
<evidence type="ECO:0000269" key="22">
    <source>
    </source>
</evidence>
<evidence type="ECO:0000269" key="23">
    <source>
    </source>
</evidence>
<evidence type="ECO:0000269" key="24">
    <source>
    </source>
</evidence>
<evidence type="ECO:0000269" key="25">
    <source>
    </source>
</evidence>
<evidence type="ECO:0000269" key="26">
    <source>
    </source>
</evidence>
<evidence type="ECO:0000305" key="27"/>
<evidence type="ECO:0007744" key="28">
    <source>
        <dbReference type="PDB" id="1S95"/>
    </source>
</evidence>
<evidence type="ECO:0007744" key="29">
    <source>
        <dbReference type="PDB" id="1WAO"/>
    </source>
</evidence>
<evidence type="ECO:0007744" key="30">
    <source>
        <dbReference type="PDB" id="3H60"/>
    </source>
</evidence>
<evidence type="ECO:0007744" key="31">
    <source>
        <dbReference type="PDB" id="3H61"/>
    </source>
</evidence>
<evidence type="ECO:0007744" key="32">
    <source>
        <dbReference type="PDB" id="3H62"/>
    </source>
</evidence>
<evidence type="ECO:0007744" key="33">
    <source>
        <dbReference type="PDB" id="3H63"/>
    </source>
</evidence>
<evidence type="ECO:0007744" key="34">
    <source>
        <dbReference type="PDB" id="3H64"/>
    </source>
</evidence>
<evidence type="ECO:0007744" key="35">
    <source>
    </source>
</evidence>
<evidence type="ECO:0007829" key="36">
    <source>
        <dbReference type="PDB" id="1A17"/>
    </source>
</evidence>
<evidence type="ECO:0007829" key="37">
    <source>
        <dbReference type="PDB" id="1S95"/>
    </source>
</evidence>
<evidence type="ECO:0007829" key="38">
    <source>
        <dbReference type="PDB" id="2BUG"/>
    </source>
</evidence>
<evidence type="ECO:0007829" key="39">
    <source>
        <dbReference type="PDB" id="3H62"/>
    </source>
</evidence>
<evidence type="ECO:0007829" key="40">
    <source>
        <dbReference type="PDB" id="3H66"/>
    </source>
</evidence>
<evidence type="ECO:0007829" key="41">
    <source>
        <dbReference type="PDB" id="4ZX2"/>
    </source>
</evidence>
<evidence type="ECO:0007829" key="42">
    <source>
        <dbReference type="PDB" id="5UI1"/>
    </source>
</evidence>
<keyword id="KW-0002">3D-structure</keyword>
<keyword id="KW-0007">Acetylation</keyword>
<keyword id="KW-0026">Alzheimer disease</keyword>
<keyword id="KW-0034">Amyloid</keyword>
<keyword id="KW-1008">Amyloidosis</keyword>
<keyword id="KW-1003">Cell membrane</keyword>
<keyword id="KW-0963">Cytoplasm</keyword>
<keyword id="KW-0227">DNA damage</keyword>
<keyword id="KW-0234">DNA repair</keyword>
<keyword id="KW-0378">Hydrolase</keyword>
<keyword id="KW-0446">Lipid-binding</keyword>
<keyword id="KW-0460">Magnesium</keyword>
<keyword id="KW-0464">Manganese</keyword>
<keyword id="KW-0472">Membrane</keyword>
<keyword id="KW-0479">Metal-binding</keyword>
<keyword id="KW-0523">Neurodegeneration</keyword>
<keyword id="KW-0539">Nucleus</keyword>
<keyword id="KW-0904">Protein phosphatase</keyword>
<keyword id="KW-1267">Proteomics identification</keyword>
<keyword id="KW-1185">Reference proteome</keyword>
<keyword id="KW-0677">Repeat</keyword>
<keyword id="KW-0802">TPR repeat</keyword>
<reference key="1">
    <citation type="submission" date="2003-05" db="EMBL/GenBank/DDBJ databases">
        <title>Cloning of human full-length CDSs in BD Creator(TM) system donor vector.</title>
        <authorList>
            <person name="Kalnine N."/>
            <person name="Chen X."/>
            <person name="Rolfs A."/>
            <person name="Halleck A."/>
            <person name="Hines L."/>
            <person name="Eisenstein S."/>
            <person name="Koundinya M."/>
            <person name="Raphael J."/>
            <person name="Moreira D."/>
            <person name="Kelley T."/>
            <person name="LaBaer J."/>
            <person name="Lin Y."/>
            <person name="Phelan M."/>
            <person name="Farmer A."/>
        </authorList>
    </citation>
    <scope>NUCLEOTIDE SEQUENCE [LARGE SCALE MRNA]</scope>
</reference>
<reference key="2">
    <citation type="submission" date="2005-07" db="EMBL/GenBank/DDBJ databases">
        <authorList>
            <person name="Mural R.J."/>
            <person name="Istrail S."/>
            <person name="Sutton G.G."/>
            <person name="Florea L."/>
            <person name="Halpern A.L."/>
            <person name="Mobarry C.M."/>
            <person name="Lippert R."/>
            <person name="Walenz B."/>
            <person name="Shatkay H."/>
            <person name="Dew I."/>
            <person name="Miller J.R."/>
            <person name="Flanigan M.J."/>
            <person name="Edwards N.J."/>
            <person name="Bolanos R."/>
            <person name="Fasulo D."/>
            <person name="Halldorsson B.V."/>
            <person name="Hannenhalli S."/>
            <person name="Turner R."/>
            <person name="Yooseph S."/>
            <person name="Lu F."/>
            <person name="Nusskern D.R."/>
            <person name="Shue B.C."/>
            <person name="Zheng X.H."/>
            <person name="Zhong F."/>
            <person name="Delcher A.L."/>
            <person name="Huson D.H."/>
            <person name="Kravitz S.A."/>
            <person name="Mouchard L."/>
            <person name="Reinert K."/>
            <person name="Remington K.A."/>
            <person name="Clark A.G."/>
            <person name="Waterman M.S."/>
            <person name="Eichler E.E."/>
            <person name="Adams M.D."/>
            <person name="Hunkapiller M.W."/>
            <person name="Myers E.W."/>
            <person name="Venter J.C."/>
        </authorList>
    </citation>
    <scope>NUCLEOTIDE SEQUENCE [LARGE SCALE GENOMIC DNA]</scope>
</reference>
<reference key="3">
    <citation type="journal article" date="1994" name="EMBO J.">
        <title>A novel human protein serine/threonine phosphatase, which possesses four tetratricopeptide repeat motifs and localizes to the nucleus.</title>
        <authorList>
            <person name="Chen M.X."/>
            <person name="McPartlin A.E."/>
            <person name="Brown L."/>
            <person name="Chen Y.H."/>
            <person name="Barker H.M."/>
            <person name="Cohen P.T.W."/>
        </authorList>
    </citation>
    <scope>NUCLEOTIDE SEQUENCE [MRNA] OF 7-499</scope>
</reference>
<reference key="4">
    <citation type="journal article" date="1995" name="Genomics">
        <title>Cloning of a highly conserved human protein serine-threonine phosphatase gene from the glioma candidate region on chromosome 19q13.3.</title>
        <authorList>
            <person name="Yong W.H."/>
            <person name="Ueki K."/>
            <person name="Chou D."/>
            <person name="Reeves S.A."/>
            <person name="von Deimling A."/>
            <person name="Gusella J.F."/>
            <person name="Mohrenweiser H.W."/>
            <person name="Buckler A.J."/>
            <person name="Louis D.N."/>
        </authorList>
    </citation>
    <scope>NUCLEOTIDE SEQUENCE [MRNA] OF 9-499</scope>
    <source>
        <tissue>Fetal brain</tissue>
    </source>
</reference>
<reference key="5">
    <citation type="journal article" date="2004" name="Nature">
        <title>The DNA sequence and biology of human chromosome 19.</title>
        <authorList>
            <person name="Grimwood J."/>
            <person name="Gordon L.A."/>
            <person name="Olsen A.S."/>
            <person name="Terry A."/>
            <person name="Schmutz J."/>
            <person name="Lamerdin J.E."/>
            <person name="Hellsten U."/>
            <person name="Goodstein D."/>
            <person name="Couronne O."/>
            <person name="Tran-Gyamfi M."/>
            <person name="Aerts A."/>
            <person name="Altherr M."/>
            <person name="Ashworth L."/>
            <person name="Bajorek E."/>
            <person name="Black S."/>
            <person name="Branscomb E."/>
            <person name="Caenepeel S."/>
            <person name="Carrano A.V."/>
            <person name="Caoile C."/>
            <person name="Chan Y.M."/>
            <person name="Christensen M."/>
            <person name="Cleland C.A."/>
            <person name="Copeland A."/>
            <person name="Dalin E."/>
            <person name="Dehal P."/>
            <person name="Denys M."/>
            <person name="Detter J.C."/>
            <person name="Escobar J."/>
            <person name="Flowers D."/>
            <person name="Fotopulos D."/>
            <person name="Garcia C."/>
            <person name="Georgescu A.M."/>
            <person name="Glavina T."/>
            <person name="Gomez M."/>
            <person name="Gonzales E."/>
            <person name="Groza M."/>
            <person name="Hammon N."/>
            <person name="Hawkins T."/>
            <person name="Haydu L."/>
            <person name="Ho I."/>
            <person name="Huang W."/>
            <person name="Israni S."/>
            <person name="Jett J."/>
            <person name="Kadner K."/>
            <person name="Kimball H."/>
            <person name="Kobayashi A."/>
            <person name="Larionov V."/>
            <person name="Leem S.-H."/>
            <person name="Lopez F."/>
            <person name="Lou Y."/>
            <person name="Lowry S."/>
            <person name="Malfatti S."/>
            <person name="Martinez D."/>
            <person name="McCready P.M."/>
            <person name="Medina C."/>
            <person name="Morgan J."/>
            <person name="Nelson K."/>
            <person name="Nolan M."/>
            <person name="Ovcharenko I."/>
            <person name="Pitluck S."/>
            <person name="Pollard M."/>
            <person name="Popkie A.P."/>
            <person name="Predki P."/>
            <person name="Quan G."/>
            <person name="Ramirez L."/>
            <person name="Rash S."/>
            <person name="Retterer J."/>
            <person name="Rodriguez A."/>
            <person name="Rogers S."/>
            <person name="Salamov A."/>
            <person name="Salazar A."/>
            <person name="She X."/>
            <person name="Smith D."/>
            <person name="Slezak T."/>
            <person name="Solovyev V."/>
            <person name="Thayer N."/>
            <person name="Tice H."/>
            <person name="Tsai M."/>
            <person name="Ustaszewska A."/>
            <person name="Vo N."/>
            <person name="Wagner M."/>
            <person name="Wheeler J."/>
            <person name="Wu K."/>
            <person name="Xie G."/>
            <person name="Yang J."/>
            <person name="Dubchak I."/>
            <person name="Furey T.S."/>
            <person name="DeJong P."/>
            <person name="Dickson M."/>
            <person name="Gordon D."/>
            <person name="Eichler E.E."/>
            <person name="Pennacchio L.A."/>
            <person name="Richardson P."/>
            <person name="Stubbs L."/>
            <person name="Rokhsar D.S."/>
            <person name="Myers R.M."/>
            <person name="Rubin E.M."/>
            <person name="Lucas S.M."/>
        </authorList>
    </citation>
    <scope>NUCLEOTIDE SEQUENCE [LARGE SCALE GENOMIC DNA]</scope>
</reference>
<reference key="6">
    <citation type="journal article" date="2004" name="Genome Res.">
        <title>The status, quality, and expansion of the NIH full-length cDNA project: the Mammalian Gene Collection (MGC).</title>
        <authorList>
            <consortium name="The MGC Project Team"/>
        </authorList>
    </citation>
    <scope>NUCLEOTIDE SEQUENCE [LARGE SCALE MRNA]</scope>
    <source>
        <tissue>Cervix</tissue>
    </source>
</reference>
<reference key="7">
    <citation type="journal article" date="1996" name="Biochem. Biophys. Res. Commun.">
        <title>Chromosomal localization and 5' sequence of the human protein serine/threonine phosphatase 5' gene.</title>
        <authorList>
            <person name="Xu X."/>
            <person name="Lagercrantz J."/>
            <person name="Zickert P."/>
            <person name="Bajalica-Lagercrantz S."/>
            <person name="Zetterberg A."/>
        </authorList>
    </citation>
    <scope>NUCLEOTIDE SEQUENCE [MRNA] OF 1-37</scope>
    <source>
        <tissue>Fetal brain</tissue>
    </source>
</reference>
<reference key="8">
    <citation type="journal article" date="1997" name="FEBS Lett.">
        <title>Activation of protein phosphatase 5 by limited proteolysis or the binding of polyunsaturated fatty acids to the TPR domain.</title>
        <authorList>
            <person name="Chen M.X."/>
            <person name="Cohen P.T."/>
        </authorList>
    </citation>
    <scope>FUNCTION</scope>
    <scope>ACTIVITY REGULATION</scope>
    <scope>LIPID-BINDING</scope>
</reference>
<reference key="9">
    <citation type="journal article" date="1997" name="J. Biol. Chem.">
        <title>The serine/threonine phosphatase PP5 interacts with CDC16 and CDC27, two tetratricopeptide repeat-containing subunits of the anaphase-promoting complex.</title>
        <authorList>
            <person name="Ollendorff V."/>
            <person name="Donoghue D.J."/>
        </authorList>
    </citation>
    <scope>INTERACTION WITH CDC16 AND CDC27</scope>
</reference>
<reference key="10">
    <citation type="journal article" date="2004" name="Genes Dev.">
        <title>Requirement of protein phosphatase 5 in DNA-damage-induced ATM activation.</title>
        <authorList>
            <person name="Ali A."/>
            <person name="Zhang J."/>
            <person name="Bao S."/>
            <person name="Liu I."/>
            <person name="Otterness D."/>
            <person name="Dean N.M."/>
            <person name="Abraham R.T."/>
            <person name="Wang X.F."/>
        </authorList>
    </citation>
    <scope>FUNCTION IN DNA DAMAGE RESPONSE</scope>
    <scope>INTERACTION WITH ATM AND RAD17</scope>
</reference>
<reference key="11">
    <citation type="journal article" date="2004" name="Mol. Endocrinol.">
        <title>Protein phosphatase 5 is a negative regulator of estrogen receptor-mediated transcription.</title>
        <authorList>
            <person name="Ikeda K."/>
            <person name="Ogawa S."/>
            <person name="Tsukui T."/>
            <person name="Horie-Inoue K."/>
            <person name="Ouchi Y."/>
            <person name="Kato S."/>
            <person name="Muramatsu M."/>
            <person name="Inoue S."/>
        </authorList>
    </citation>
    <scope>FUNCTION IN DEPHOSPHORYLATION OF ESR1 AND ESR2</scope>
</reference>
<reference key="12">
    <citation type="journal article" date="2004" name="Proc. Natl. Acad. Sci. U.S.A.">
        <title>DNA-PKcs function regulated specifically by protein phosphatase 5.</title>
        <authorList>
            <person name="Wechsler T."/>
            <person name="Chen B.P."/>
            <person name="Harper R."/>
            <person name="Morotomi-Yano K."/>
            <person name="Huang B.C."/>
            <person name="Meek K."/>
            <person name="Cleaver J.E."/>
            <person name="Chen D.J."/>
            <person name="Wabl M."/>
        </authorList>
    </citation>
    <scope>FUNCTION IN DEPHOSPHORYLATION OF PRKDC</scope>
</reference>
<reference key="13">
    <citation type="journal article" date="2005" name="Biochem. J.">
        <title>Human protein phosphatase 5 dissociates from heat-shock proteins and is proteolytically activated in response to arachidonic acid and the microtubule-depolymerizing drug nocodazole.</title>
        <authorList>
            <person name="Zeke T."/>
            <person name="Morrice N."/>
            <person name="Vazquez-Martin C."/>
            <person name="Cohen P.T."/>
        </authorList>
    </citation>
    <scope>FUNCTION</scope>
    <scope>INTERACTION WITH HSP90AA1 AND HSPA1A</scope>
    <scope>LIPID-BINDING</scope>
    <scope>ACTIVITY REGULATION</scope>
    <scope>SUBCELLULAR LOCATION</scope>
    <scope>CLEAVAGE</scope>
    <scope>IDENTIFICATION BY MASS SPECTROMETRY</scope>
</reference>
<reference key="14">
    <citation type="journal article" date="2005" name="J. Biol. Chem.">
        <title>Dephosphorylation of tau by protein phosphatase 5: impairment in Alzheimer's disease.</title>
        <authorList>
            <person name="Liu F."/>
            <person name="Iqbal K."/>
            <person name="Grundke-Iqbal I."/>
            <person name="Rossie S."/>
            <person name="Gong C.X."/>
        </authorList>
    </citation>
    <scope>FUNCTION IN DEPHOSPHORYLATION OF MAPT</scope>
    <scope>BIOPHYSICOCHEMICAL PROPERTIES</scope>
    <scope>TISSUE SPECIFICITY</scope>
</reference>
<reference key="15">
    <citation type="journal article" date="2005" name="Mol. Cell. Biol.">
        <title>Protein phosphatase 5 is required for ATR-mediated checkpoint activation.</title>
        <authorList>
            <person name="Zhang J."/>
            <person name="Bao S."/>
            <person name="Furumai R."/>
            <person name="Kucera K.S."/>
            <person name="Ali A."/>
            <person name="Dean N.M."/>
            <person name="Wang X.F."/>
        </authorList>
    </citation>
    <scope>FUNCTION IN DNA DAMAGE RESPONSE</scope>
</reference>
<reference key="16">
    <citation type="journal article" date="2006" name="Nat. Cell Biol.">
        <title>Regulation of the Raf-MEK-ERK pathway by protein phosphatase 5.</title>
        <authorList>
            <person name="von Kriegsheim A."/>
            <person name="Pitt A."/>
            <person name="Grindlay G.J."/>
            <person name="Kolch W."/>
            <person name="Dhillon A.S."/>
        </authorList>
    </citation>
    <scope>FUNCTION IN MAPK SIGNALING</scope>
    <scope>IDENTIFICATION BY MASS SPECTROMETRY</scope>
    <scope>MUTAGENESIS OF LYS-97 AND HIS-304</scope>
</reference>
<reference key="17">
    <citation type="journal article" date="2006" name="Proc. Natl. Acad. Sci. U.S.A.">
        <title>Posttranslational regulation of the mammalian circadian clock by cryptochrome and protein phosphatase 5.</title>
        <authorList>
            <person name="Partch C.L."/>
            <person name="Shields K.F."/>
            <person name="Thompson C.L."/>
            <person name="Selby C.P."/>
            <person name="Sancar A."/>
        </authorList>
    </citation>
    <scope>FUNCTION IN DEPHOSPHORYLATION OF CSNK1E</scope>
    <scope>INTERACTION WITH CRY1 AND CRY2</scope>
    <scope>BIOPHYSICOCHEMICAL PROPERTIES</scope>
    <scope>MUTAGENESIS OF HIS-304</scope>
</reference>
<reference key="18">
    <citation type="journal article" date="2009" name="Anal. Chem.">
        <title>Lys-N and trypsin cover complementary parts of the phosphoproteome in a refined SCX-based approach.</title>
        <authorList>
            <person name="Gauci S."/>
            <person name="Helbig A.O."/>
            <person name="Slijper M."/>
            <person name="Krijgsveld J."/>
            <person name="Heck A.J."/>
            <person name="Mohammed S."/>
        </authorList>
    </citation>
    <scope>ACETYLATION [LARGE SCALE ANALYSIS] AT ALA-2</scope>
    <scope>CLEAVAGE OF INITIATOR METHIONINE [LARGE SCALE ANALYSIS]</scope>
    <scope>IDENTIFICATION BY MASS SPECTROMETRY [LARGE SCALE ANALYSIS]</scope>
</reference>
<reference key="19">
    <citation type="journal article" date="2009" name="J. Biol. Chem.">
        <title>Protein phosphatase 5 regulates the function of 53BP1 after neocarzinostatin-induced DNA damage.</title>
        <authorList>
            <person name="Kang Y."/>
            <person name="Lee J.H."/>
            <person name="Hoan N.N."/>
            <person name="Sohn H.M."/>
            <person name="Chang I.Y."/>
            <person name="You H.J."/>
        </authorList>
    </citation>
    <scope>FUNCTION IN DEPHOSPHORYLATION OF TP53BP1</scope>
</reference>
<reference key="20">
    <citation type="journal article" date="2009" name="Science">
        <title>Lysine acetylation targets protein complexes and co-regulates major cellular functions.</title>
        <authorList>
            <person name="Choudhary C."/>
            <person name="Kumar C."/>
            <person name="Gnad F."/>
            <person name="Nielsen M.L."/>
            <person name="Rehman M."/>
            <person name="Walther T.C."/>
            <person name="Olsen J.V."/>
            <person name="Mann M."/>
        </authorList>
    </citation>
    <scope>IDENTIFICATION BY MASS SPECTROMETRY [LARGE SCALE ANALYSIS]</scope>
</reference>
<reference key="21">
    <citation type="journal article" date="2010" name="J. Biol. Chem.">
        <title>Activated Rac1 GTPase translocates protein phosphatase 5 to the cell membrane and stimulates phosphatase activity in vitro.</title>
        <authorList>
            <person name="Chatterjee A."/>
            <person name="Wang L."/>
            <person name="Armstrong D.L."/>
            <person name="Rossie S."/>
        </authorList>
    </citation>
    <scope>FUNCTION AS PHOSPHATASE</scope>
    <scope>INTERACTION WITH RAC1</scope>
    <scope>ACTIVITY REGULATION</scope>
    <scope>SUBCELLULAR LOCATION</scope>
    <scope>MUTAGENESIS OF LYS-93 AND HIS-304</scope>
</reference>
<reference key="22">
    <citation type="journal article" date="2011" name="BMC Syst. Biol.">
        <title>Initial characterization of the human central proteome.</title>
        <authorList>
            <person name="Burkard T.R."/>
            <person name="Planyavsky M."/>
            <person name="Kaupe I."/>
            <person name="Breitwieser F.P."/>
            <person name="Buerckstuemmer T."/>
            <person name="Bennett K.L."/>
            <person name="Superti-Furga G."/>
            <person name="Colinge J."/>
        </authorList>
    </citation>
    <scope>IDENTIFICATION BY MASS SPECTROMETRY [LARGE SCALE ANALYSIS]</scope>
</reference>
<reference key="23">
    <citation type="journal article" date="2011" name="Biochem. Biophys. Res. Commun.">
        <title>Protein phosphatase 5 is necessary for ATR-mediated DNA repair.</title>
        <authorList>
            <person name="Kang Y."/>
            <person name="Cheong H.M."/>
            <person name="Lee J.H."/>
            <person name="Song P.I."/>
            <person name="Lee K.H."/>
            <person name="Kim S.Y."/>
            <person name="Jun J.Y."/>
            <person name="You H.J."/>
        </authorList>
    </citation>
    <scope>FUNCTION IN DNA DAMAGE RESPONSE</scope>
</reference>
<reference key="24">
    <citation type="journal article" date="2012" name="Cell. Signal.">
        <title>Protein phosphatase 5 modulates SMAD3 function in the transforming growth factor-beta pathway.</title>
        <authorList>
            <person name="Bruce D.L."/>
            <person name="Macartney T."/>
            <person name="Yong W."/>
            <person name="Shou W."/>
            <person name="Sapkota G.P."/>
        </authorList>
    </citation>
    <scope>FUNCTION IN TGF-BETA SIGNALING</scope>
    <scope>INTERACTION WITH SMAD2 AND SMAD3</scope>
</reference>
<reference key="25">
    <citation type="journal article" date="2012" name="J. Biol. Chem.">
        <title>S100 proteins modulate protein phosphatase 5 function: a link between CA2+ signal transduction and protein dephosphorylation.</title>
        <authorList>
            <person name="Yamaguchi F."/>
            <person name="Umeda Y."/>
            <person name="Shimamoto S."/>
            <person name="Tsuchiya M."/>
            <person name="Tokumitsu H."/>
            <person name="Tokuda M."/>
            <person name="Kobayashi R."/>
        </authorList>
    </citation>
    <scope>FUNCTION AS PHOSPHATASE</scope>
    <scope>INTERACTION WITH S100A1; S100A2; S100A6 AND S100B</scope>
    <scope>ACTIVITY REGULATION</scope>
    <scope>MUTAGENESIS OF LYS-32; ARG-74; LYS-97 AND ARG-101</scope>
</reference>
<reference key="26">
    <citation type="journal article" date="2012" name="Mol. Cell">
        <title>The Kelch repeat protein KLHDC10 regulates oxidative stress-induced ASK1 activation by suppressing PP5.</title>
        <authorList>
            <person name="Sekine Y."/>
            <person name="Hatanaka R."/>
            <person name="Watanabe T."/>
            <person name="Sono N."/>
            <person name="Iemura S."/>
            <person name="Natsume T."/>
            <person name="Kuranaga E."/>
            <person name="Miura M."/>
            <person name="Takeda K."/>
            <person name="Ichijo H."/>
        </authorList>
    </citation>
    <scope>FUNCTION IN DEPHOSPHORYLATION OF MAP3K5</scope>
    <scope>INTERACTION WITH KLHDC10</scope>
    <scope>CLEAVAGE</scope>
</reference>
<reference key="27">
    <citation type="journal article" date="2016" name="Nat. Commun.">
        <title>The FNIP co-chaperones decelerate the Hsp90 chaperone cycle and enhance drug binding.</title>
        <authorList>
            <person name="Woodford M.R."/>
            <person name="Dunn D.M."/>
            <person name="Blanden A.R."/>
            <person name="Capriotti D."/>
            <person name="Loiselle D."/>
            <person name="Prodromou C."/>
            <person name="Panaretou B."/>
            <person name="Hughes P.F."/>
            <person name="Smith A."/>
            <person name="Ackerman W."/>
            <person name="Haystead T.A."/>
            <person name="Loh S.N."/>
            <person name="Bourboulia D."/>
            <person name="Schmidt L.S."/>
            <person name="Marston Linehan W."/>
            <person name="Bratslavsky G."/>
            <person name="Mollapour M."/>
        </authorList>
    </citation>
    <scope>INTERACTION WITH HSP90AA1 AND FLCN</scope>
</reference>
<reference key="28">
    <citation type="journal article" date="2017" name="EMBO J.">
        <title>Tumor suppressor Tsc1 is a new Hsp90 co-chaperone that facilitates folding of kinase and non-kinase clients.</title>
        <authorList>
            <person name="Woodford M.R."/>
            <person name="Sager R.A."/>
            <person name="Marris E."/>
            <person name="Dunn D.M."/>
            <person name="Blanden A.R."/>
            <person name="Murphy R.L."/>
            <person name="Rensing N."/>
            <person name="Shapiro O."/>
            <person name="Panaretou B."/>
            <person name="Prodromou C."/>
            <person name="Loh S.N."/>
            <person name="Gutmann D.H."/>
            <person name="Bourboulia D."/>
            <person name="Bratslavsky G."/>
            <person name="Wong M."/>
            <person name="Mollapour M."/>
        </authorList>
    </citation>
    <scope>IDENTIFICATION IN A COMPLEX WITH HSP90; HSP70; STIP1; CDC37; PTGES3; TSC1; TSC2; AKT; CDK4; RAF1 AND NR3C1</scope>
</reference>
<reference key="29">
    <citation type="journal article" date="2019" name="Cell Rep.">
        <title>Post-translational regulation of FNIP1 creates a rheostat for the molecular chaperone Hsp90.</title>
        <authorList>
            <person name="Sager R.A."/>
            <person name="Woodford M.R."/>
            <person name="Backe S.J."/>
            <person name="Makedon A.M."/>
            <person name="Baker-Williams A.J."/>
            <person name="DiGregorio B.T."/>
            <person name="Loiselle D.R."/>
            <person name="Haystead T.A."/>
            <person name="Zachara N.E."/>
            <person name="Prodromou C."/>
            <person name="Bourboulia D."/>
            <person name="Schmidt L.S."/>
            <person name="Linehan W.M."/>
            <person name="Bratslavsky G."/>
            <person name="Mollapour M."/>
        </authorList>
    </citation>
    <scope>FUNCTION</scope>
</reference>
<reference key="30">
    <citation type="journal article" date="1998" name="EMBO J.">
        <title>The structure of the tetratricopeptide repeats of protein phosphatase 5: implications for TPR-mediated protein-protein interactions.</title>
        <authorList>
            <person name="Das A.K."/>
            <person name="Cohen P.T.W."/>
            <person name="Barford D."/>
        </authorList>
    </citation>
    <scope>X-RAY CRYSTALLOGRAPHY (2.45 ANGSTROMS) OF 19-177</scope>
</reference>
<reference key="31">
    <citation type="journal article" date="2004" name="J. Biol. Chem.">
        <title>Structural basis for the catalytic activity of human serine/threonine protein phosphatase-5.</title>
        <authorList>
            <person name="Swingle M.R."/>
            <person name="Honkanen R.E."/>
            <person name="Ciszak E.M."/>
        </authorList>
    </citation>
    <scope>X-RAY CRYSTALLOGRAPHY (1.60 ANGSTROMS) OF 169-499 IN COMPLEX WITH SUBSTRATE AND MAGNESIUM OR MANGANESE</scope>
    <scope>COFACTOR</scope>
    <scope>ACTIVE SITE</scope>
    <scope>MAGNESIUM OR MANGANESE-BINDING SITES</scope>
</reference>
<reference key="32">
    <citation type="journal article" date="2005" name="EMBO J.">
        <title>Molecular basis for TPR domain-mediated regulation of protein phosphatase 5.</title>
        <authorList>
            <person name="Yang J."/>
            <person name="Roe S.M."/>
            <person name="Cliff M.J."/>
            <person name="Williams M.A."/>
            <person name="Ladbury J.E."/>
            <person name="Cohen P.T."/>
            <person name="Barford D."/>
        </authorList>
    </citation>
    <scope>X-RAY CRYSTALLOGRAPHY (2.90 ANGSTROMS) OF 23-499 IN COMPLEX WITH MANGANESE IONS</scope>
    <scope>INTERACTION WITH HSP90AA1</scope>
    <scope>ACTIVITY REGULATION</scope>
    <scope>COFACTOR</scope>
    <scope>MAGNESIUM OR MANGANESE-BINDING SITES</scope>
    <scope>LIPID-BINDING</scope>
</reference>
<reference key="33">
    <citation type="journal article" date="2006" name="Structure">
        <title>Conformational diversity in the TPR domain-mediated interaction of protein phosphatase 5 with Hsp90.</title>
        <authorList>
            <person name="Cliff M.J."/>
            <person name="Harris R."/>
            <person name="Barford D."/>
            <person name="Ladbury J.E."/>
            <person name="Williams M.A."/>
        </authorList>
    </citation>
    <scope>STRUCTURE BY NMR OF 19-147 IN COMPLEX WITH HSP90AA1 PEPTIDE</scope>
    <scope>INTERACTION WITH HSP90AA1</scope>
    <scope>MUTAGENESIS OF GLY-83</scope>
</reference>
<reference key="34">
    <citation type="journal article" date="2009" name="J. Med. Chem.">
        <title>Structural basis of serine/threonine phosphatase inhibition by the archetypal small molecules cantharidin and norcantharidin.</title>
        <authorList>
            <person name="Bertini I."/>
            <person name="Calderone V."/>
            <person name="Fragai M."/>
            <person name="Luchinat C."/>
            <person name="Talluri E."/>
        </authorList>
    </citation>
    <scope>X-RAY CRYSTALLOGRAPHY (1.30 ANGSTROMS) OF 176-490 IN COMPLEX WITH INHIBITORS AND MANGANESE</scope>
    <scope>COFACTOR</scope>
    <scope>ACTIVITY REGULATION</scope>
    <scope>MANGANESE-BINDING SITES</scope>
</reference>
<proteinExistence type="evidence at protein level"/>
<dbReference type="EC" id="3.1.3.16" evidence="4 5 9 13 15 21 24"/>
<dbReference type="EMBL" id="BT007275">
    <property type="protein sequence ID" value="AAP35939.1"/>
    <property type="molecule type" value="mRNA"/>
</dbReference>
<dbReference type="EMBL" id="X89416">
    <property type="protein sequence ID" value="CAA61595.1"/>
    <property type="molecule type" value="mRNA"/>
</dbReference>
<dbReference type="EMBL" id="U25174">
    <property type="protein sequence ID" value="AAB60384.1"/>
    <property type="molecule type" value="mRNA"/>
</dbReference>
<dbReference type="EMBL" id="AC007193">
    <property type="protein sequence ID" value="AAD22669.1"/>
    <property type="molecule type" value="Genomic_DNA"/>
</dbReference>
<dbReference type="EMBL" id="CH471126">
    <property type="protein sequence ID" value="EAW57416.1"/>
    <property type="molecule type" value="Genomic_DNA"/>
</dbReference>
<dbReference type="EMBL" id="BC001970">
    <property type="protein sequence ID" value="AAH01970.1"/>
    <property type="molecule type" value="mRNA"/>
</dbReference>
<dbReference type="EMBL" id="X92121">
    <property type="protein sequence ID" value="CAA63089.1"/>
    <property type="molecule type" value="mRNA"/>
</dbReference>
<dbReference type="CCDS" id="CCDS12684.1"/>
<dbReference type="PIR" id="S52570">
    <property type="entry name" value="S52570"/>
</dbReference>
<dbReference type="RefSeq" id="NP_006238.1">
    <property type="nucleotide sequence ID" value="NM_006247.4"/>
</dbReference>
<dbReference type="PDB" id="1A17">
    <property type="method" value="X-ray"/>
    <property type="resolution" value="2.45 A"/>
    <property type="chains" value="A=16-181"/>
</dbReference>
<dbReference type="PDB" id="1S95">
    <property type="method" value="X-ray"/>
    <property type="resolution" value="1.60 A"/>
    <property type="chains" value="A/B=169-499"/>
</dbReference>
<dbReference type="PDB" id="1WAO">
    <property type="method" value="X-ray"/>
    <property type="resolution" value="2.90 A"/>
    <property type="chains" value="1/2/3/4=23-499"/>
</dbReference>
<dbReference type="PDB" id="2BUG">
    <property type="method" value="NMR"/>
    <property type="chains" value="A=19-147"/>
</dbReference>
<dbReference type="PDB" id="3H60">
    <property type="method" value="X-ray"/>
    <property type="resolution" value="2.00 A"/>
    <property type="chains" value="A/B=176-490"/>
</dbReference>
<dbReference type="PDB" id="3H61">
    <property type="method" value="X-ray"/>
    <property type="resolution" value="1.45 A"/>
    <property type="chains" value="A/D=176-490"/>
</dbReference>
<dbReference type="PDB" id="3H62">
    <property type="method" value="X-ray"/>
    <property type="resolution" value="1.40 A"/>
    <property type="chains" value="B/C=176-490"/>
</dbReference>
<dbReference type="PDB" id="3H63">
    <property type="method" value="X-ray"/>
    <property type="resolution" value="1.30 A"/>
    <property type="chains" value="A/C=176-490"/>
</dbReference>
<dbReference type="PDB" id="3H64">
    <property type="method" value="X-ray"/>
    <property type="resolution" value="1.90 A"/>
    <property type="chains" value="A/D=176-490"/>
</dbReference>
<dbReference type="PDB" id="3H66">
    <property type="method" value="X-ray"/>
    <property type="resolution" value="2.59 A"/>
    <property type="chains" value="A/B=176-490"/>
</dbReference>
<dbReference type="PDB" id="3H67">
    <property type="method" value="X-ray"/>
    <property type="resolution" value="1.65 A"/>
    <property type="chains" value="A/D=176-490"/>
</dbReference>
<dbReference type="PDB" id="3H68">
    <property type="method" value="X-ray"/>
    <property type="resolution" value="1.50 A"/>
    <property type="chains" value="A/D=176-490"/>
</dbReference>
<dbReference type="PDB" id="3H69">
    <property type="method" value="X-ray"/>
    <property type="resolution" value="2.10 A"/>
    <property type="chains" value="A/D=176-490"/>
</dbReference>
<dbReference type="PDB" id="4ZVZ">
    <property type="method" value="X-ray"/>
    <property type="resolution" value="2.00 A"/>
    <property type="chains" value="A/B/C/D=169-499"/>
</dbReference>
<dbReference type="PDB" id="4ZX2">
    <property type="method" value="X-ray"/>
    <property type="resolution" value="1.23 A"/>
    <property type="chains" value="A=169-499"/>
</dbReference>
<dbReference type="PDB" id="5HPE">
    <property type="method" value="X-ray"/>
    <property type="resolution" value="2.27 A"/>
    <property type="chains" value="A=175-499"/>
</dbReference>
<dbReference type="PDB" id="5UI1">
    <property type="method" value="X-ray"/>
    <property type="resolution" value="1.96 A"/>
    <property type="chains" value="A/B/C/D=169-499"/>
</dbReference>
<dbReference type="PDB" id="5WG8">
    <property type="method" value="X-ray"/>
    <property type="resolution" value="1.65 A"/>
    <property type="chains" value="A=169-499"/>
</dbReference>
<dbReference type="PDB" id="7ZR5">
    <property type="method" value="EM"/>
    <property type="resolution" value="3.90 A"/>
    <property type="chains" value="P=17-499"/>
</dbReference>
<dbReference type="PDB" id="7ZR6">
    <property type="method" value="EM"/>
    <property type="resolution" value="4.20 A"/>
    <property type="chains" value="P=17-499"/>
</dbReference>
<dbReference type="PDB" id="8GAE">
    <property type="method" value="EM"/>
    <property type="resolution" value="3.30 A"/>
    <property type="chains" value="E=1-499"/>
</dbReference>
<dbReference type="PDB" id="8GFT">
    <property type="method" value="EM"/>
    <property type="resolution" value="3.80 A"/>
    <property type="chains" value="E=1-499"/>
</dbReference>
<dbReference type="PDBsum" id="1A17"/>
<dbReference type="PDBsum" id="1S95"/>
<dbReference type="PDBsum" id="1WAO"/>
<dbReference type="PDBsum" id="2BUG"/>
<dbReference type="PDBsum" id="3H60"/>
<dbReference type="PDBsum" id="3H61"/>
<dbReference type="PDBsum" id="3H62"/>
<dbReference type="PDBsum" id="3H63"/>
<dbReference type="PDBsum" id="3H64"/>
<dbReference type="PDBsum" id="3H66"/>
<dbReference type="PDBsum" id="3H67"/>
<dbReference type="PDBsum" id="3H68"/>
<dbReference type="PDBsum" id="3H69"/>
<dbReference type="PDBsum" id="4ZVZ"/>
<dbReference type="PDBsum" id="4ZX2"/>
<dbReference type="PDBsum" id="5HPE"/>
<dbReference type="PDBsum" id="5UI1"/>
<dbReference type="PDBsum" id="5WG8"/>
<dbReference type="PDBsum" id="7ZR5"/>
<dbReference type="PDBsum" id="7ZR6"/>
<dbReference type="PDBsum" id="8GAE"/>
<dbReference type="PDBsum" id="8GFT"/>
<dbReference type="BMRB" id="P53041"/>
<dbReference type="EMDB" id="EMD-14883"/>
<dbReference type="EMDB" id="EMD-14884"/>
<dbReference type="EMDB" id="EMD-29895"/>
<dbReference type="EMDB" id="EMD-29984"/>
<dbReference type="SMR" id="P53041"/>
<dbReference type="BioGRID" id="111528">
    <property type="interactions" value="188"/>
</dbReference>
<dbReference type="CORUM" id="P53041"/>
<dbReference type="DIP" id="DIP-29043N"/>
<dbReference type="FunCoup" id="P53041">
    <property type="interactions" value="3781"/>
</dbReference>
<dbReference type="IntAct" id="P53041">
    <property type="interactions" value="98"/>
</dbReference>
<dbReference type="MINT" id="P53041"/>
<dbReference type="STRING" id="9606.ENSP00000012443"/>
<dbReference type="BindingDB" id="P53041"/>
<dbReference type="ChEMBL" id="CHEMBL3425389"/>
<dbReference type="DrugBank" id="DB00171">
    <property type="generic name" value="ATP"/>
</dbReference>
<dbReference type="DEPOD" id="PPP5C"/>
<dbReference type="GlyGen" id="P53041">
    <property type="glycosylation" value="1 site, 1 O-linked glycan (1 site)"/>
</dbReference>
<dbReference type="iPTMnet" id="P53041"/>
<dbReference type="MetOSite" id="P53041"/>
<dbReference type="PhosphoSitePlus" id="P53041"/>
<dbReference type="SwissPalm" id="P53041"/>
<dbReference type="BioMuta" id="PPP5C"/>
<dbReference type="DMDM" id="1709744"/>
<dbReference type="jPOST" id="P53041"/>
<dbReference type="MassIVE" id="P53041"/>
<dbReference type="PaxDb" id="9606-ENSP00000012443"/>
<dbReference type="PeptideAtlas" id="P53041"/>
<dbReference type="ProteomicsDB" id="56568"/>
<dbReference type="Pumba" id="P53041"/>
<dbReference type="Antibodypedia" id="31446">
    <property type="antibodies" value="685 antibodies from 32 providers"/>
</dbReference>
<dbReference type="DNASU" id="5536"/>
<dbReference type="Ensembl" id="ENST00000012443.9">
    <property type="protein sequence ID" value="ENSP00000012443.4"/>
    <property type="gene ID" value="ENSG00000011485.15"/>
</dbReference>
<dbReference type="GeneID" id="5536"/>
<dbReference type="KEGG" id="hsa:5536"/>
<dbReference type="MANE-Select" id="ENST00000012443.9">
    <property type="protein sequence ID" value="ENSP00000012443.4"/>
    <property type="RefSeq nucleotide sequence ID" value="NM_006247.4"/>
    <property type="RefSeq protein sequence ID" value="NP_006238.1"/>
</dbReference>
<dbReference type="UCSC" id="uc002pem.4">
    <property type="organism name" value="human"/>
</dbReference>
<dbReference type="AGR" id="HGNC:9322"/>
<dbReference type="CTD" id="5536"/>
<dbReference type="DisGeNET" id="5536"/>
<dbReference type="GeneCards" id="PPP5C"/>
<dbReference type="HGNC" id="HGNC:9322">
    <property type="gene designation" value="PPP5C"/>
</dbReference>
<dbReference type="HPA" id="ENSG00000011485">
    <property type="expression patterns" value="Low tissue specificity"/>
</dbReference>
<dbReference type="MIM" id="600658">
    <property type="type" value="gene"/>
</dbReference>
<dbReference type="neXtProt" id="NX_P53041"/>
<dbReference type="OpenTargets" id="ENSG00000011485"/>
<dbReference type="PharmGKB" id="PA33686"/>
<dbReference type="VEuPathDB" id="HostDB:ENSG00000011485"/>
<dbReference type="eggNOG" id="KOG0376">
    <property type="taxonomic scope" value="Eukaryota"/>
</dbReference>
<dbReference type="GeneTree" id="ENSGT00940000158785"/>
<dbReference type="InParanoid" id="P53041"/>
<dbReference type="OMA" id="IHKKYAF"/>
<dbReference type="OrthoDB" id="445564at2759"/>
<dbReference type="PAN-GO" id="P53041">
    <property type="GO annotations" value="3 GO annotations based on evolutionary models"/>
</dbReference>
<dbReference type="PhylomeDB" id="P53041"/>
<dbReference type="TreeFam" id="TF105562"/>
<dbReference type="BRENDA" id="3.1.3.16">
    <property type="organism ID" value="2681"/>
</dbReference>
<dbReference type="PathwayCommons" id="P53041"/>
<dbReference type="Reactome" id="R-HSA-5675221">
    <property type="pathway name" value="Negative regulation of MAPK pathway"/>
</dbReference>
<dbReference type="Reactome" id="R-HSA-5693565">
    <property type="pathway name" value="Recruitment and ATM-mediated phosphorylation of repair and signaling proteins at DNA double strand breaks"/>
</dbReference>
<dbReference type="Reactome" id="R-HSA-8939211">
    <property type="pathway name" value="ESR-mediated signaling"/>
</dbReference>
<dbReference type="SABIO-RK" id="P53041"/>
<dbReference type="SignaLink" id="P53041"/>
<dbReference type="SIGNOR" id="P53041"/>
<dbReference type="BioGRID-ORCS" id="5536">
    <property type="hits" value="24 hits in 1178 CRISPR screens"/>
</dbReference>
<dbReference type="ChiTaRS" id="PPP5C">
    <property type="organism name" value="human"/>
</dbReference>
<dbReference type="EvolutionaryTrace" id="P53041"/>
<dbReference type="GeneWiki" id="PPP5C"/>
<dbReference type="GenomeRNAi" id="5536"/>
<dbReference type="Pharos" id="P53041">
    <property type="development level" value="Tbio"/>
</dbReference>
<dbReference type="PRO" id="PR:P53041"/>
<dbReference type="Proteomes" id="UP000005640">
    <property type="component" value="Chromosome 19"/>
</dbReference>
<dbReference type="RNAct" id="P53041">
    <property type="molecule type" value="protein"/>
</dbReference>
<dbReference type="Bgee" id="ENSG00000011485">
    <property type="expression patterns" value="Expressed in cortical plate and 127 other cell types or tissues"/>
</dbReference>
<dbReference type="ExpressionAtlas" id="P53041">
    <property type="expression patterns" value="baseline and differential"/>
</dbReference>
<dbReference type="GO" id="GO:0005829">
    <property type="term" value="C:cytosol"/>
    <property type="evidence" value="ECO:0000314"/>
    <property type="project" value="HPA"/>
</dbReference>
<dbReference type="GO" id="GO:0043231">
    <property type="term" value="C:intracellular membrane-bounded organelle"/>
    <property type="evidence" value="ECO:0000314"/>
    <property type="project" value="HPA"/>
</dbReference>
<dbReference type="GO" id="GO:0005654">
    <property type="term" value="C:nucleoplasm"/>
    <property type="evidence" value="ECO:0000304"/>
    <property type="project" value="Reactome"/>
</dbReference>
<dbReference type="GO" id="GO:0005634">
    <property type="term" value="C:nucleus"/>
    <property type="evidence" value="ECO:0000318"/>
    <property type="project" value="GO_Central"/>
</dbReference>
<dbReference type="GO" id="GO:0043204">
    <property type="term" value="C:perikaryon"/>
    <property type="evidence" value="ECO:0007669"/>
    <property type="project" value="Ensembl"/>
</dbReference>
<dbReference type="GO" id="GO:0005886">
    <property type="term" value="C:plasma membrane"/>
    <property type="evidence" value="ECO:0007669"/>
    <property type="project" value="UniProtKB-SubCell"/>
</dbReference>
<dbReference type="GO" id="GO:0101031">
    <property type="term" value="C:protein folding chaperone complex"/>
    <property type="evidence" value="ECO:0000314"/>
    <property type="project" value="UniProtKB"/>
</dbReference>
<dbReference type="GO" id="GO:0032991">
    <property type="term" value="C:protein-containing complex"/>
    <property type="evidence" value="ECO:0000314"/>
    <property type="project" value="MGI"/>
</dbReference>
<dbReference type="GO" id="GO:1990635">
    <property type="term" value="C:proximal dendrite"/>
    <property type="evidence" value="ECO:0007669"/>
    <property type="project" value="Ensembl"/>
</dbReference>
<dbReference type="GO" id="GO:0043531">
    <property type="term" value="F:ADP binding"/>
    <property type="evidence" value="ECO:0000314"/>
    <property type="project" value="MGI"/>
</dbReference>
<dbReference type="GO" id="GO:0005524">
    <property type="term" value="F:ATP binding"/>
    <property type="evidence" value="ECO:0000314"/>
    <property type="project" value="MGI"/>
</dbReference>
<dbReference type="GO" id="GO:0001965">
    <property type="term" value="F:G-protein alpha-subunit binding"/>
    <property type="evidence" value="ECO:0007669"/>
    <property type="project" value="Ensembl"/>
</dbReference>
<dbReference type="GO" id="GO:0030544">
    <property type="term" value="F:Hsp70 protein binding"/>
    <property type="evidence" value="ECO:0007669"/>
    <property type="project" value="Ensembl"/>
</dbReference>
<dbReference type="GO" id="GO:0051879">
    <property type="term" value="F:Hsp90 protein binding"/>
    <property type="evidence" value="ECO:0000353"/>
    <property type="project" value="CAFA"/>
</dbReference>
<dbReference type="GO" id="GO:0042802">
    <property type="term" value="F:identical protein binding"/>
    <property type="evidence" value="ECO:0000353"/>
    <property type="project" value="IntAct"/>
</dbReference>
<dbReference type="GO" id="GO:0008289">
    <property type="term" value="F:lipid binding"/>
    <property type="evidence" value="ECO:0007669"/>
    <property type="project" value="UniProtKB-KW"/>
</dbReference>
<dbReference type="GO" id="GO:0046872">
    <property type="term" value="F:metal ion binding"/>
    <property type="evidence" value="ECO:0007669"/>
    <property type="project" value="UniProtKB-KW"/>
</dbReference>
<dbReference type="GO" id="GO:0008017">
    <property type="term" value="F:microtubule binding"/>
    <property type="evidence" value="ECO:0007669"/>
    <property type="project" value="Ensembl"/>
</dbReference>
<dbReference type="GO" id="GO:0031435">
    <property type="term" value="F:mitogen-activated protein kinase kinase kinase binding"/>
    <property type="evidence" value="ECO:0007669"/>
    <property type="project" value="Ensembl"/>
</dbReference>
<dbReference type="GO" id="GO:0016791">
    <property type="term" value="F:phosphatase activity"/>
    <property type="evidence" value="ECO:0000314"/>
    <property type="project" value="ARUK-UCL"/>
</dbReference>
<dbReference type="GO" id="GO:0004721">
    <property type="term" value="F:phosphoprotein phosphatase activity"/>
    <property type="evidence" value="ECO:0000250"/>
    <property type="project" value="UniProtKB"/>
</dbReference>
<dbReference type="GO" id="GO:0030291">
    <property type="term" value="F:protein serine/threonine kinase inhibitor activity"/>
    <property type="evidence" value="ECO:0007669"/>
    <property type="project" value="Ensembl"/>
</dbReference>
<dbReference type="GO" id="GO:0004722">
    <property type="term" value="F:protein serine/threonine phosphatase activity"/>
    <property type="evidence" value="ECO:0000314"/>
    <property type="project" value="UniProtKB"/>
</dbReference>
<dbReference type="GO" id="GO:0044877">
    <property type="term" value="F:protein-containing complex binding"/>
    <property type="evidence" value="ECO:0007669"/>
    <property type="project" value="Ensembl"/>
</dbReference>
<dbReference type="GO" id="GO:0003723">
    <property type="term" value="F:RNA binding"/>
    <property type="evidence" value="ECO:0007669"/>
    <property type="project" value="Ensembl"/>
</dbReference>
<dbReference type="GO" id="GO:0048156">
    <property type="term" value="F:tau protein binding"/>
    <property type="evidence" value="ECO:0000303"/>
    <property type="project" value="ARUK-UCL"/>
</dbReference>
<dbReference type="GO" id="GO:0071276">
    <property type="term" value="P:cellular response to cadmium ion"/>
    <property type="evidence" value="ECO:0007669"/>
    <property type="project" value="Ensembl"/>
</dbReference>
<dbReference type="GO" id="GO:0070301">
    <property type="term" value="P:cellular response to hydrogen peroxide"/>
    <property type="evidence" value="ECO:0007669"/>
    <property type="project" value="Ensembl"/>
</dbReference>
<dbReference type="GO" id="GO:0006351">
    <property type="term" value="P:DNA-templated transcription"/>
    <property type="evidence" value="ECO:0000304"/>
    <property type="project" value="ProtInc"/>
</dbReference>
<dbReference type="GO" id="GO:0006302">
    <property type="term" value="P:double-strand break repair"/>
    <property type="evidence" value="ECO:0000304"/>
    <property type="project" value="Reactome"/>
</dbReference>
<dbReference type="GO" id="GO:0000165">
    <property type="term" value="P:MAPK cascade"/>
    <property type="evidence" value="ECO:0000304"/>
    <property type="project" value="Reactome"/>
</dbReference>
<dbReference type="GO" id="GO:0000278">
    <property type="term" value="P:mitotic cell cycle"/>
    <property type="evidence" value="ECO:0000304"/>
    <property type="project" value="ProtInc"/>
</dbReference>
<dbReference type="GO" id="GO:0043066">
    <property type="term" value="P:negative regulation of apoptotic process"/>
    <property type="evidence" value="ECO:0007669"/>
    <property type="project" value="Ensembl"/>
</dbReference>
<dbReference type="GO" id="GO:0043409">
    <property type="term" value="P:negative regulation of MAPK cascade"/>
    <property type="evidence" value="ECO:0007669"/>
    <property type="project" value="Ensembl"/>
</dbReference>
<dbReference type="GO" id="GO:0070262">
    <property type="term" value="P:peptidyl-serine dephosphorylation"/>
    <property type="evidence" value="ECO:0000314"/>
    <property type="project" value="UniProtKB"/>
</dbReference>
<dbReference type="GO" id="GO:0035970">
    <property type="term" value="P:peptidyl-threonine dephosphorylation"/>
    <property type="evidence" value="ECO:0000304"/>
    <property type="project" value="ARUK-UCL"/>
</dbReference>
<dbReference type="GO" id="GO:0043123">
    <property type="term" value="P:positive regulation of canonical NF-kappaB signal transduction"/>
    <property type="evidence" value="ECO:0007001"/>
    <property type="project" value="UniProtKB"/>
</dbReference>
<dbReference type="GO" id="GO:2000324">
    <property type="term" value="P:positive regulation of nuclear receptor-mediated glucocorticoid signaling pathway"/>
    <property type="evidence" value="ECO:0007669"/>
    <property type="project" value="Ensembl"/>
</dbReference>
<dbReference type="GO" id="GO:0006470">
    <property type="term" value="P:protein dephosphorylation"/>
    <property type="evidence" value="ECO:0000304"/>
    <property type="project" value="ProtInc"/>
</dbReference>
<dbReference type="GO" id="GO:1904550">
    <property type="term" value="P:response to arachidonate"/>
    <property type="evidence" value="ECO:0000250"/>
    <property type="project" value="ARUK-UCL"/>
</dbReference>
<dbReference type="GO" id="GO:0010288">
    <property type="term" value="P:response to lead ion"/>
    <property type="evidence" value="ECO:0000250"/>
    <property type="project" value="ARUK-UCL"/>
</dbReference>
<dbReference type="GO" id="GO:0043278">
    <property type="term" value="P:response to morphine"/>
    <property type="evidence" value="ECO:0007669"/>
    <property type="project" value="Ensembl"/>
</dbReference>
<dbReference type="CDD" id="cd07417">
    <property type="entry name" value="MPP_PP5_C"/>
    <property type="match status" value="1"/>
</dbReference>
<dbReference type="FunFam" id="1.25.40.10:FF:000055">
    <property type="entry name" value="Serine/threonine-protein phosphatase"/>
    <property type="match status" value="1"/>
</dbReference>
<dbReference type="FunFam" id="3.60.21.10:FF:000017">
    <property type="entry name" value="Serine/threonine-protein phosphatase"/>
    <property type="match status" value="1"/>
</dbReference>
<dbReference type="Gene3D" id="3.60.21.10">
    <property type="match status" value="1"/>
</dbReference>
<dbReference type="Gene3D" id="1.25.40.10">
    <property type="entry name" value="Tetratricopeptide repeat domain"/>
    <property type="match status" value="1"/>
</dbReference>
<dbReference type="InterPro" id="IPR004843">
    <property type="entry name" value="Calcineurin-like_PHP_ApaH"/>
</dbReference>
<dbReference type="InterPro" id="IPR029052">
    <property type="entry name" value="Metallo-depent_PP-like"/>
</dbReference>
<dbReference type="InterPro" id="IPR041753">
    <property type="entry name" value="PP5_C"/>
</dbReference>
<dbReference type="InterPro" id="IPR013235">
    <property type="entry name" value="PPP_dom"/>
</dbReference>
<dbReference type="InterPro" id="IPR051134">
    <property type="entry name" value="PPP_phosphatase"/>
</dbReference>
<dbReference type="InterPro" id="IPR006186">
    <property type="entry name" value="Ser/Thr-sp_prot-phosphatase"/>
</dbReference>
<dbReference type="InterPro" id="IPR011990">
    <property type="entry name" value="TPR-like_helical_dom_sf"/>
</dbReference>
<dbReference type="InterPro" id="IPR019734">
    <property type="entry name" value="TPR_rpt"/>
</dbReference>
<dbReference type="PANTHER" id="PTHR45668">
    <property type="entry name" value="SERINE/THREONINE-PROTEIN PHOSPHATASE 5-RELATED"/>
    <property type="match status" value="1"/>
</dbReference>
<dbReference type="PANTHER" id="PTHR45668:SF5">
    <property type="entry name" value="SERINE_THREONINE-PROTEIN PHOSPHATASE 5"/>
    <property type="match status" value="1"/>
</dbReference>
<dbReference type="Pfam" id="PF00149">
    <property type="entry name" value="Metallophos"/>
    <property type="match status" value="1"/>
</dbReference>
<dbReference type="Pfam" id="PF08321">
    <property type="entry name" value="PPP5"/>
    <property type="match status" value="1"/>
</dbReference>
<dbReference type="Pfam" id="PF00515">
    <property type="entry name" value="TPR_1"/>
    <property type="match status" value="1"/>
</dbReference>
<dbReference type="PIRSF" id="PIRSF033096">
    <property type="entry name" value="PPPtase_5"/>
    <property type="match status" value="1"/>
</dbReference>
<dbReference type="PRINTS" id="PR00114">
    <property type="entry name" value="STPHPHTASE"/>
</dbReference>
<dbReference type="SMART" id="SM00156">
    <property type="entry name" value="PP2Ac"/>
    <property type="match status" value="1"/>
</dbReference>
<dbReference type="SMART" id="SM00028">
    <property type="entry name" value="TPR"/>
    <property type="match status" value="3"/>
</dbReference>
<dbReference type="SUPFAM" id="SSF56300">
    <property type="entry name" value="Metallo-dependent phosphatases"/>
    <property type="match status" value="1"/>
</dbReference>
<dbReference type="SUPFAM" id="SSF48452">
    <property type="entry name" value="TPR-like"/>
    <property type="match status" value="1"/>
</dbReference>
<dbReference type="PROSITE" id="PS00125">
    <property type="entry name" value="SER_THR_PHOSPHATASE"/>
    <property type="match status" value="1"/>
</dbReference>
<dbReference type="PROSITE" id="PS50005">
    <property type="entry name" value="TPR"/>
    <property type="match status" value="3"/>
</dbReference>
<dbReference type="PROSITE" id="PS50293">
    <property type="entry name" value="TPR_REGION"/>
    <property type="match status" value="1"/>
</dbReference>